<sequence length="642" mass="73986">MPVITLPDGSQRHYDHAVSPMDVALDIGPGLAKACIAGRVNGELVDACDLIENDAQLSIITAKDEDGLEIIRHSCAHLLGHAIKQLWPHTKMAIGPVIDNGFYYDVDLDRTLTQEDVEALEKRMHELAEKNYDVIKKKVSWHEARETFANRGESYKVSILDENIAHDDKPGLYFHEEYVDMCRGPHVPNMRFCHHFKLMKTAGAYWRGDSNNKMLQRIYGTAWADKKALNAYLQRLEEAAKRDHRKIGKQLDLYHMQEEAPGMVFWHNDGWTIFRELEVFVRSKLKEYQYQEVKGPFMMDRVLWEKTGHWDNYKDAMFTTSSENREYCIKPMNCPGHVQIFNQGLKSYRDLPLRMAEFGSCHRNEPSGSLHGLMRVRGFTQDDAHIFCTEEQIRDEVNGCIRLVYDMYSTFGFEKIVVKLSTRPEKRIGSDEMWDRAEADLAVALEENNIPFEYQLGEGAFYGPKIEFTLYDCLDRAWQCGTVQLDFSLPSRLSASYVGEDNERKVPVMIHRAILGSMERFIGILTEEFAGFFPTWLAPVQVVIMNITDSQSDYVNELTQKLSNAGIRVKADLRNEKIGFKIREHTLRRVPYMLVCGDKEVESGKVAVRTRRGKDLGSMDVNEVIEKLQQEIRSRSLKQLEE</sequence>
<dbReference type="EC" id="6.1.1.3" evidence="1"/>
<dbReference type="EMBL" id="CU928145">
    <property type="protein sequence ID" value="CAU97745.1"/>
    <property type="molecule type" value="Genomic_DNA"/>
</dbReference>
<dbReference type="RefSeq" id="WP_001144190.1">
    <property type="nucleotide sequence ID" value="NC_011748.1"/>
</dbReference>
<dbReference type="SMR" id="B7L6J2"/>
<dbReference type="GeneID" id="75205636"/>
<dbReference type="KEGG" id="eck:EC55989_1886"/>
<dbReference type="HOGENOM" id="CLU_008554_0_1_6"/>
<dbReference type="Proteomes" id="UP000000746">
    <property type="component" value="Chromosome"/>
</dbReference>
<dbReference type="GO" id="GO:0005829">
    <property type="term" value="C:cytosol"/>
    <property type="evidence" value="ECO:0007669"/>
    <property type="project" value="TreeGrafter"/>
</dbReference>
<dbReference type="GO" id="GO:0005524">
    <property type="term" value="F:ATP binding"/>
    <property type="evidence" value="ECO:0007669"/>
    <property type="project" value="UniProtKB-UniRule"/>
</dbReference>
<dbReference type="GO" id="GO:0046872">
    <property type="term" value="F:metal ion binding"/>
    <property type="evidence" value="ECO:0007669"/>
    <property type="project" value="UniProtKB-KW"/>
</dbReference>
<dbReference type="GO" id="GO:0004829">
    <property type="term" value="F:threonine-tRNA ligase activity"/>
    <property type="evidence" value="ECO:0007669"/>
    <property type="project" value="UniProtKB-UniRule"/>
</dbReference>
<dbReference type="GO" id="GO:0000049">
    <property type="term" value="F:tRNA binding"/>
    <property type="evidence" value="ECO:0007669"/>
    <property type="project" value="UniProtKB-KW"/>
</dbReference>
<dbReference type="GO" id="GO:0006435">
    <property type="term" value="P:threonyl-tRNA aminoacylation"/>
    <property type="evidence" value="ECO:0007669"/>
    <property type="project" value="UniProtKB-UniRule"/>
</dbReference>
<dbReference type="CDD" id="cd01667">
    <property type="entry name" value="TGS_ThrRS"/>
    <property type="match status" value="1"/>
</dbReference>
<dbReference type="CDD" id="cd00860">
    <property type="entry name" value="ThrRS_anticodon"/>
    <property type="match status" value="1"/>
</dbReference>
<dbReference type="CDD" id="cd00771">
    <property type="entry name" value="ThrRS_core"/>
    <property type="match status" value="1"/>
</dbReference>
<dbReference type="FunFam" id="3.10.20.30:FF:000005">
    <property type="entry name" value="Threonine--tRNA ligase"/>
    <property type="match status" value="1"/>
</dbReference>
<dbReference type="FunFam" id="3.30.54.20:FF:000002">
    <property type="entry name" value="Threonine--tRNA ligase"/>
    <property type="match status" value="1"/>
</dbReference>
<dbReference type="FunFam" id="3.30.930.10:FF:000002">
    <property type="entry name" value="Threonine--tRNA ligase"/>
    <property type="match status" value="1"/>
</dbReference>
<dbReference type="FunFam" id="3.40.50.800:FF:000001">
    <property type="entry name" value="Threonine--tRNA ligase"/>
    <property type="match status" value="1"/>
</dbReference>
<dbReference type="FunFam" id="3.30.980.10:FF:000005">
    <property type="entry name" value="Threonyl-tRNA synthetase, mitochondrial"/>
    <property type="match status" value="1"/>
</dbReference>
<dbReference type="Gene3D" id="3.10.20.30">
    <property type="match status" value="1"/>
</dbReference>
<dbReference type="Gene3D" id="3.30.54.20">
    <property type="match status" value="1"/>
</dbReference>
<dbReference type="Gene3D" id="3.40.50.800">
    <property type="entry name" value="Anticodon-binding domain"/>
    <property type="match status" value="1"/>
</dbReference>
<dbReference type="Gene3D" id="3.30.930.10">
    <property type="entry name" value="Bira Bifunctional Protein, Domain 2"/>
    <property type="match status" value="1"/>
</dbReference>
<dbReference type="Gene3D" id="3.30.980.10">
    <property type="entry name" value="Threonyl-trna Synthetase, Chain A, domain 2"/>
    <property type="match status" value="1"/>
</dbReference>
<dbReference type="HAMAP" id="MF_00184">
    <property type="entry name" value="Thr_tRNA_synth"/>
    <property type="match status" value="1"/>
</dbReference>
<dbReference type="InterPro" id="IPR002314">
    <property type="entry name" value="aa-tRNA-synt_IIb"/>
</dbReference>
<dbReference type="InterPro" id="IPR006195">
    <property type="entry name" value="aa-tRNA-synth_II"/>
</dbReference>
<dbReference type="InterPro" id="IPR045864">
    <property type="entry name" value="aa-tRNA-synth_II/BPL/LPL"/>
</dbReference>
<dbReference type="InterPro" id="IPR004154">
    <property type="entry name" value="Anticodon-bd"/>
</dbReference>
<dbReference type="InterPro" id="IPR036621">
    <property type="entry name" value="Anticodon-bd_dom_sf"/>
</dbReference>
<dbReference type="InterPro" id="IPR012675">
    <property type="entry name" value="Beta-grasp_dom_sf"/>
</dbReference>
<dbReference type="InterPro" id="IPR004095">
    <property type="entry name" value="TGS"/>
</dbReference>
<dbReference type="InterPro" id="IPR012676">
    <property type="entry name" value="TGS-like"/>
</dbReference>
<dbReference type="InterPro" id="IPR002320">
    <property type="entry name" value="Thr-tRNA-ligase_IIa"/>
</dbReference>
<dbReference type="InterPro" id="IPR018163">
    <property type="entry name" value="Thr/Ala-tRNA-synth_IIc_edit"/>
</dbReference>
<dbReference type="InterPro" id="IPR047246">
    <property type="entry name" value="ThrRS_anticodon"/>
</dbReference>
<dbReference type="InterPro" id="IPR033728">
    <property type="entry name" value="ThrRS_core"/>
</dbReference>
<dbReference type="InterPro" id="IPR012947">
    <property type="entry name" value="tRNA_SAD"/>
</dbReference>
<dbReference type="NCBIfam" id="TIGR00418">
    <property type="entry name" value="thrS"/>
    <property type="match status" value="1"/>
</dbReference>
<dbReference type="PANTHER" id="PTHR11451:SF44">
    <property type="entry name" value="THREONINE--TRNA LIGASE, CHLOROPLASTIC_MITOCHONDRIAL 2"/>
    <property type="match status" value="1"/>
</dbReference>
<dbReference type="PANTHER" id="PTHR11451">
    <property type="entry name" value="THREONINE-TRNA LIGASE"/>
    <property type="match status" value="1"/>
</dbReference>
<dbReference type="Pfam" id="PF03129">
    <property type="entry name" value="HGTP_anticodon"/>
    <property type="match status" value="1"/>
</dbReference>
<dbReference type="Pfam" id="PF02824">
    <property type="entry name" value="TGS"/>
    <property type="match status" value="1"/>
</dbReference>
<dbReference type="Pfam" id="PF00587">
    <property type="entry name" value="tRNA-synt_2b"/>
    <property type="match status" value="1"/>
</dbReference>
<dbReference type="Pfam" id="PF07973">
    <property type="entry name" value="tRNA_SAD"/>
    <property type="match status" value="1"/>
</dbReference>
<dbReference type="PRINTS" id="PR01047">
    <property type="entry name" value="TRNASYNTHTHR"/>
</dbReference>
<dbReference type="SMART" id="SM00863">
    <property type="entry name" value="tRNA_SAD"/>
    <property type="match status" value="1"/>
</dbReference>
<dbReference type="SUPFAM" id="SSF52954">
    <property type="entry name" value="Class II aaRS ABD-related"/>
    <property type="match status" value="1"/>
</dbReference>
<dbReference type="SUPFAM" id="SSF55681">
    <property type="entry name" value="Class II aaRS and biotin synthetases"/>
    <property type="match status" value="1"/>
</dbReference>
<dbReference type="SUPFAM" id="SSF81271">
    <property type="entry name" value="TGS-like"/>
    <property type="match status" value="1"/>
</dbReference>
<dbReference type="SUPFAM" id="SSF55186">
    <property type="entry name" value="ThrRS/AlaRS common domain"/>
    <property type="match status" value="1"/>
</dbReference>
<dbReference type="PROSITE" id="PS50862">
    <property type="entry name" value="AA_TRNA_LIGASE_II"/>
    <property type="match status" value="1"/>
</dbReference>
<dbReference type="PROSITE" id="PS51880">
    <property type="entry name" value="TGS"/>
    <property type="match status" value="1"/>
</dbReference>
<keyword id="KW-0007">Acetylation</keyword>
<keyword id="KW-0030">Aminoacyl-tRNA synthetase</keyword>
<keyword id="KW-0067">ATP-binding</keyword>
<keyword id="KW-0963">Cytoplasm</keyword>
<keyword id="KW-0436">Ligase</keyword>
<keyword id="KW-0479">Metal-binding</keyword>
<keyword id="KW-0547">Nucleotide-binding</keyword>
<keyword id="KW-0648">Protein biosynthesis</keyword>
<keyword id="KW-1185">Reference proteome</keyword>
<keyword id="KW-0694">RNA-binding</keyword>
<keyword id="KW-0820">tRNA-binding</keyword>
<keyword id="KW-0862">Zinc</keyword>
<organism>
    <name type="scientific">Escherichia coli (strain 55989 / EAEC)</name>
    <dbReference type="NCBI Taxonomy" id="585055"/>
    <lineage>
        <taxon>Bacteria</taxon>
        <taxon>Pseudomonadati</taxon>
        <taxon>Pseudomonadota</taxon>
        <taxon>Gammaproteobacteria</taxon>
        <taxon>Enterobacterales</taxon>
        <taxon>Enterobacteriaceae</taxon>
        <taxon>Escherichia</taxon>
    </lineage>
</organism>
<accession>B7L6J2</accession>
<gene>
    <name evidence="1" type="primary">thrS</name>
    <name type="ordered locus">EC55989_1886</name>
</gene>
<protein>
    <recommendedName>
        <fullName evidence="1">Threonine--tRNA ligase</fullName>
        <ecNumber evidence="1">6.1.1.3</ecNumber>
    </recommendedName>
    <alternativeName>
        <fullName evidence="1">Threonyl-tRNA synthetase</fullName>
        <shortName evidence="1">ThrRS</shortName>
    </alternativeName>
</protein>
<proteinExistence type="inferred from homology"/>
<feature type="chain" id="PRO_1000199544" description="Threonine--tRNA ligase">
    <location>
        <begin position="1"/>
        <end position="642"/>
    </location>
</feature>
<feature type="domain" description="TGS" evidence="2">
    <location>
        <begin position="1"/>
        <end position="61"/>
    </location>
</feature>
<feature type="region of interest" description="Catalytic" evidence="1">
    <location>
        <begin position="243"/>
        <end position="534"/>
    </location>
</feature>
<feature type="binding site" evidence="1">
    <location>
        <position position="334"/>
    </location>
    <ligand>
        <name>Zn(2+)</name>
        <dbReference type="ChEBI" id="CHEBI:29105"/>
    </ligand>
</feature>
<feature type="binding site" evidence="1">
    <location>
        <position position="385"/>
    </location>
    <ligand>
        <name>Zn(2+)</name>
        <dbReference type="ChEBI" id="CHEBI:29105"/>
    </ligand>
</feature>
<feature type="binding site" evidence="1">
    <location>
        <position position="511"/>
    </location>
    <ligand>
        <name>Zn(2+)</name>
        <dbReference type="ChEBI" id="CHEBI:29105"/>
    </ligand>
</feature>
<feature type="modified residue" description="N6-acetyllysine" evidence="1">
    <location>
        <position position="286"/>
    </location>
</feature>
<evidence type="ECO:0000255" key="1">
    <source>
        <dbReference type="HAMAP-Rule" id="MF_00184"/>
    </source>
</evidence>
<evidence type="ECO:0000255" key="2">
    <source>
        <dbReference type="PROSITE-ProRule" id="PRU01228"/>
    </source>
</evidence>
<name>SYT_ECO55</name>
<reference key="1">
    <citation type="journal article" date="2009" name="PLoS Genet.">
        <title>Organised genome dynamics in the Escherichia coli species results in highly diverse adaptive paths.</title>
        <authorList>
            <person name="Touchon M."/>
            <person name="Hoede C."/>
            <person name="Tenaillon O."/>
            <person name="Barbe V."/>
            <person name="Baeriswyl S."/>
            <person name="Bidet P."/>
            <person name="Bingen E."/>
            <person name="Bonacorsi S."/>
            <person name="Bouchier C."/>
            <person name="Bouvet O."/>
            <person name="Calteau A."/>
            <person name="Chiapello H."/>
            <person name="Clermont O."/>
            <person name="Cruveiller S."/>
            <person name="Danchin A."/>
            <person name="Diard M."/>
            <person name="Dossat C."/>
            <person name="Karoui M.E."/>
            <person name="Frapy E."/>
            <person name="Garry L."/>
            <person name="Ghigo J.M."/>
            <person name="Gilles A.M."/>
            <person name="Johnson J."/>
            <person name="Le Bouguenec C."/>
            <person name="Lescat M."/>
            <person name="Mangenot S."/>
            <person name="Martinez-Jehanne V."/>
            <person name="Matic I."/>
            <person name="Nassif X."/>
            <person name="Oztas S."/>
            <person name="Petit M.A."/>
            <person name="Pichon C."/>
            <person name="Rouy Z."/>
            <person name="Ruf C.S."/>
            <person name="Schneider D."/>
            <person name="Tourret J."/>
            <person name="Vacherie B."/>
            <person name="Vallenet D."/>
            <person name="Medigue C."/>
            <person name="Rocha E.P.C."/>
            <person name="Denamur E."/>
        </authorList>
    </citation>
    <scope>NUCLEOTIDE SEQUENCE [LARGE SCALE GENOMIC DNA]</scope>
    <source>
        <strain>55989 / EAEC</strain>
    </source>
</reference>
<comment type="function">
    <text evidence="1">Catalyzes the attachment of threonine to tRNA(Thr) in a two-step reaction: L-threonine is first activated by ATP to form Thr-AMP and then transferred to the acceptor end of tRNA(Thr). Also edits incorrectly charged L-seryl-tRNA(Thr).</text>
</comment>
<comment type="catalytic activity">
    <reaction evidence="1">
        <text>tRNA(Thr) + L-threonine + ATP = L-threonyl-tRNA(Thr) + AMP + diphosphate + H(+)</text>
        <dbReference type="Rhea" id="RHEA:24624"/>
        <dbReference type="Rhea" id="RHEA-COMP:9670"/>
        <dbReference type="Rhea" id="RHEA-COMP:9704"/>
        <dbReference type="ChEBI" id="CHEBI:15378"/>
        <dbReference type="ChEBI" id="CHEBI:30616"/>
        <dbReference type="ChEBI" id="CHEBI:33019"/>
        <dbReference type="ChEBI" id="CHEBI:57926"/>
        <dbReference type="ChEBI" id="CHEBI:78442"/>
        <dbReference type="ChEBI" id="CHEBI:78534"/>
        <dbReference type="ChEBI" id="CHEBI:456215"/>
        <dbReference type="EC" id="6.1.1.3"/>
    </reaction>
</comment>
<comment type="cofactor">
    <cofactor evidence="1">
        <name>Zn(2+)</name>
        <dbReference type="ChEBI" id="CHEBI:29105"/>
    </cofactor>
    <text evidence="1">Binds 1 zinc ion per subunit.</text>
</comment>
<comment type="subunit">
    <text evidence="1">Homodimer.</text>
</comment>
<comment type="subcellular location">
    <subcellularLocation>
        <location evidence="1">Cytoplasm</location>
    </subcellularLocation>
</comment>
<comment type="similarity">
    <text evidence="1">Belongs to the class-II aminoacyl-tRNA synthetase family.</text>
</comment>